<gene>
    <name evidence="1" type="primary">rpsD</name>
    <name type="ordered locus">Rxyl_2129</name>
</gene>
<feature type="chain" id="PRO_0000293357" description="Small ribosomal subunit protein uS4">
    <location>
        <begin position="1"/>
        <end position="200"/>
    </location>
</feature>
<feature type="domain" description="S4 RNA-binding" evidence="1">
    <location>
        <begin position="92"/>
        <end position="158"/>
    </location>
</feature>
<feature type="region of interest" description="Disordered" evidence="2">
    <location>
        <begin position="1"/>
        <end position="43"/>
    </location>
</feature>
<feature type="compositionally biased region" description="Basic and acidic residues" evidence="2">
    <location>
        <begin position="25"/>
        <end position="43"/>
    </location>
</feature>
<proteinExistence type="inferred from homology"/>
<name>RS4_RUBXD</name>
<sequence>MARYTGPRGRRDRRAGVMLSSMRKNPLEKKPYPPGEHGRDRQRQTEYGLRLMEKQKARWYYGVSERQFRRAYEEAIRQPGVSGENLLRLMELRMDNVVYRMGFATSRPQARQLVVHGHFLLNGRKHNIPSATLKPGDVITVRDKSRRLQPIQEAVEQVVAVPAWLEADHENFTGRVLHTPSRDEIDAPVEEQLIIEFYSR</sequence>
<accession>Q1AU55</accession>
<protein>
    <recommendedName>
        <fullName evidence="1">Small ribosomal subunit protein uS4</fullName>
    </recommendedName>
    <alternativeName>
        <fullName evidence="3">30S ribosomal protein S4</fullName>
    </alternativeName>
</protein>
<comment type="function">
    <text evidence="1">One of the primary rRNA binding proteins, it binds directly to 16S rRNA where it nucleates assembly of the body of the 30S subunit.</text>
</comment>
<comment type="function">
    <text evidence="1">With S5 and S12 plays an important role in translational accuracy.</text>
</comment>
<comment type="subunit">
    <text evidence="1">Part of the 30S ribosomal subunit. Contacts protein S5. The interaction surface between S4 and S5 is involved in control of translational fidelity.</text>
</comment>
<comment type="similarity">
    <text evidence="1">Belongs to the universal ribosomal protein uS4 family.</text>
</comment>
<reference key="1">
    <citation type="submission" date="2006-06" db="EMBL/GenBank/DDBJ databases">
        <title>Complete sequence of Rubrobacter xylanophilus DSM 9941.</title>
        <authorList>
            <consortium name="US DOE Joint Genome Institute"/>
            <person name="Copeland A."/>
            <person name="Lucas S."/>
            <person name="Lapidus A."/>
            <person name="Barry K."/>
            <person name="Detter J.C."/>
            <person name="Glavina del Rio T."/>
            <person name="Hammon N."/>
            <person name="Israni S."/>
            <person name="Dalin E."/>
            <person name="Tice H."/>
            <person name="Pitluck S."/>
            <person name="Munk A.C."/>
            <person name="Brettin T."/>
            <person name="Bruce D."/>
            <person name="Han C."/>
            <person name="Tapia R."/>
            <person name="Gilna P."/>
            <person name="Schmutz J."/>
            <person name="Larimer F."/>
            <person name="Land M."/>
            <person name="Hauser L."/>
            <person name="Kyrpides N."/>
            <person name="Lykidis A."/>
            <person name="da Costa M.S."/>
            <person name="Rainey F.A."/>
            <person name="Empadinhas N."/>
            <person name="Jolivet E."/>
            <person name="Battista J.R."/>
            <person name="Richardson P."/>
        </authorList>
    </citation>
    <scope>NUCLEOTIDE SEQUENCE [LARGE SCALE GENOMIC DNA]</scope>
    <source>
        <strain>DSM 9941 / JCM 11954 / NBRC 16129 / PRD-1</strain>
    </source>
</reference>
<evidence type="ECO:0000255" key="1">
    <source>
        <dbReference type="HAMAP-Rule" id="MF_01306"/>
    </source>
</evidence>
<evidence type="ECO:0000256" key="2">
    <source>
        <dbReference type="SAM" id="MobiDB-lite"/>
    </source>
</evidence>
<evidence type="ECO:0000305" key="3"/>
<keyword id="KW-1185">Reference proteome</keyword>
<keyword id="KW-0687">Ribonucleoprotein</keyword>
<keyword id="KW-0689">Ribosomal protein</keyword>
<keyword id="KW-0694">RNA-binding</keyword>
<keyword id="KW-0699">rRNA-binding</keyword>
<dbReference type="EMBL" id="CP000386">
    <property type="protein sequence ID" value="ABG05073.1"/>
    <property type="molecule type" value="Genomic_DNA"/>
</dbReference>
<dbReference type="RefSeq" id="WP_011565088.1">
    <property type="nucleotide sequence ID" value="NC_008148.1"/>
</dbReference>
<dbReference type="SMR" id="Q1AU55"/>
<dbReference type="STRING" id="266117.Rxyl_2129"/>
<dbReference type="KEGG" id="rxy:Rxyl_2129"/>
<dbReference type="eggNOG" id="COG0522">
    <property type="taxonomic scope" value="Bacteria"/>
</dbReference>
<dbReference type="HOGENOM" id="CLU_092403_0_2_11"/>
<dbReference type="OrthoDB" id="9803672at2"/>
<dbReference type="PhylomeDB" id="Q1AU55"/>
<dbReference type="Proteomes" id="UP000006637">
    <property type="component" value="Chromosome"/>
</dbReference>
<dbReference type="GO" id="GO:0015935">
    <property type="term" value="C:small ribosomal subunit"/>
    <property type="evidence" value="ECO:0007669"/>
    <property type="project" value="InterPro"/>
</dbReference>
<dbReference type="GO" id="GO:0019843">
    <property type="term" value="F:rRNA binding"/>
    <property type="evidence" value="ECO:0007669"/>
    <property type="project" value="UniProtKB-UniRule"/>
</dbReference>
<dbReference type="GO" id="GO:0003735">
    <property type="term" value="F:structural constituent of ribosome"/>
    <property type="evidence" value="ECO:0007669"/>
    <property type="project" value="InterPro"/>
</dbReference>
<dbReference type="GO" id="GO:0042274">
    <property type="term" value="P:ribosomal small subunit biogenesis"/>
    <property type="evidence" value="ECO:0007669"/>
    <property type="project" value="TreeGrafter"/>
</dbReference>
<dbReference type="GO" id="GO:0006412">
    <property type="term" value="P:translation"/>
    <property type="evidence" value="ECO:0007669"/>
    <property type="project" value="UniProtKB-UniRule"/>
</dbReference>
<dbReference type="CDD" id="cd00165">
    <property type="entry name" value="S4"/>
    <property type="match status" value="1"/>
</dbReference>
<dbReference type="FunFam" id="3.10.290.10:FF:000001">
    <property type="entry name" value="30S ribosomal protein S4"/>
    <property type="match status" value="1"/>
</dbReference>
<dbReference type="Gene3D" id="1.10.1050.10">
    <property type="entry name" value="Ribosomal Protein S4 Delta 41, Chain A, domain 1"/>
    <property type="match status" value="1"/>
</dbReference>
<dbReference type="Gene3D" id="3.10.290.10">
    <property type="entry name" value="RNA-binding S4 domain"/>
    <property type="match status" value="1"/>
</dbReference>
<dbReference type="HAMAP" id="MF_01306_B">
    <property type="entry name" value="Ribosomal_uS4_B"/>
    <property type="match status" value="1"/>
</dbReference>
<dbReference type="InterPro" id="IPR022801">
    <property type="entry name" value="Ribosomal_uS4"/>
</dbReference>
<dbReference type="InterPro" id="IPR005709">
    <property type="entry name" value="Ribosomal_uS4_bac-type"/>
</dbReference>
<dbReference type="InterPro" id="IPR001912">
    <property type="entry name" value="Ribosomal_uS4_N"/>
</dbReference>
<dbReference type="InterPro" id="IPR002942">
    <property type="entry name" value="S4_RNA-bd"/>
</dbReference>
<dbReference type="InterPro" id="IPR036986">
    <property type="entry name" value="S4_RNA-bd_sf"/>
</dbReference>
<dbReference type="NCBIfam" id="NF003717">
    <property type="entry name" value="PRK05327.1"/>
    <property type="match status" value="1"/>
</dbReference>
<dbReference type="NCBIfam" id="TIGR01017">
    <property type="entry name" value="rpsD_bact"/>
    <property type="match status" value="1"/>
</dbReference>
<dbReference type="PANTHER" id="PTHR11831">
    <property type="entry name" value="30S 40S RIBOSOMAL PROTEIN"/>
    <property type="match status" value="1"/>
</dbReference>
<dbReference type="PANTHER" id="PTHR11831:SF4">
    <property type="entry name" value="SMALL RIBOSOMAL SUBUNIT PROTEIN US4M"/>
    <property type="match status" value="1"/>
</dbReference>
<dbReference type="Pfam" id="PF00163">
    <property type="entry name" value="Ribosomal_S4"/>
    <property type="match status" value="1"/>
</dbReference>
<dbReference type="Pfam" id="PF01479">
    <property type="entry name" value="S4"/>
    <property type="match status" value="1"/>
</dbReference>
<dbReference type="SMART" id="SM01390">
    <property type="entry name" value="Ribosomal_S4"/>
    <property type="match status" value="1"/>
</dbReference>
<dbReference type="SMART" id="SM00363">
    <property type="entry name" value="S4"/>
    <property type="match status" value="1"/>
</dbReference>
<dbReference type="SUPFAM" id="SSF55174">
    <property type="entry name" value="Alpha-L RNA-binding motif"/>
    <property type="match status" value="1"/>
</dbReference>
<dbReference type="PROSITE" id="PS50889">
    <property type="entry name" value="S4"/>
    <property type="match status" value="1"/>
</dbReference>
<organism>
    <name type="scientific">Rubrobacter xylanophilus (strain DSM 9941 / JCM 11954 / NBRC 16129 / PRD-1)</name>
    <dbReference type="NCBI Taxonomy" id="266117"/>
    <lineage>
        <taxon>Bacteria</taxon>
        <taxon>Bacillati</taxon>
        <taxon>Actinomycetota</taxon>
        <taxon>Rubrobacteria</taxon>
        <taxon>Rubrobacterales</taxon>
        <taxon>Rubrobacteraceae</taxon>
        <taxon>Rubrobacter</taxon>
    </lineage>
</organism>